<protein>
    <recommendedName>
        <fullName evidence="4">Major facilitator-type transporter psiT2</fullName>
    </recommendedName>
    <alternativeName>
        <fullName evidence="4">Psilocybin biosynthesis cluster transporter 2</fullName>
    </alternativeName>
</protein>
<comment type="function">
    <text evidence="6">Major facilitator-type transporter; part of the gene cluster that mediates the biosynthesis of psilocybin, a psychotropic tryptamine-derived natural product (PubMed:28763571).</text>
</comment>
<comment type="subcellular location">
    <subcellularLocation>
        <location evidence="1">Membrane</location>
        <topology evidence="1">Multi-pass membrane protein</topology>
    </subcellularLocation>
</comment>
<comment type="similarity">
    <text evidence="5">Belongs to the major facilitator superfamily. TCR/Tet family.</text>
</comment>
<name>PSIT2_PSICU</name>
<keyword id="KW-0325">Glycoprotein</keyword>
<keyword id="KW-0472">Membrane</keyword>
<keyword id="KW-0812">Transmembrane</keyword>
<keyword id="KW-1133">Transmembrane helix</keyword>
<keyword id="KW-0813">Transport</keyword>
<reference key="1">
    <citation type="journal article" date="2017" name="Angew. Chem. Int. Ed.">
        <title>Enzymatic synthesis of psilocybin.</title>
        <authorList>
            <person name="Fricke J."/>
            <person name="Blei F."/>
            <person name="Hoffmeister D."/>
        </authorList>
    </citation>
    <scope>NUCLEOTIDE SEQUENCE [GENOMIC DNA]</scope>
    <scope>IDENTIFICATION</scope>
    <scope>FUNCTION</scope>
</reference>
<dbReference type="EMBL" id="MF000992">
    <property type="protein sequence ID" value="ASU62245.1"/>
    <property type="molecule type" value="Genomic_RNA"/>
</dbReference>
<dbReference type="SMR" id="P0DPB2"/>
<dbReference type="GlyCosmos" id="P0DPB2">
    <property type="glycosylation" value="2 sites, No reported glycans"/>
</dbReference>
<dbReference type="GO" id="GO:0016020">
    <property type="term" value="C:membrane"/>
    <property type="evidence" value="ECO:0007669"/>
    <property type="project" value="UniProtKB-SubCell"/>
</dbReference>
<dbReference type="GO" id="GO:0022857">
    <property type="term" value="F:transmembrane transporter activity"/>
    <property type="evidence" value="ECO:0007669"/>
    <property type="project" value="InterPro"/>
</dbReference>
<dbReference type="Gene3D" id="1.20.1250.20">
    <property type="entry name" value="MFS general substrate transporter like domains"/>
    <property type="match status" value="1"/>
</dbReference>
<dbReference type="InterPro" id="IPR011701">
    <property type="entry name" value="MFS"/>
</dbReference>
<dbReference type="InterPro" id="IPR020846">
    <property type="entry name" value="MFS_dom"/>
</dbReference>
<dbReference type="InterPro" id="IPR036259">
    <property type="entry name" value="MFS_trans_sf"/>
</dbReference>
<dbReference type="InterPro" id="IPR005829">
    <property type="entry name" value="Sugar_transporter_CS"/>
</dbReference>
<dbReference type="PANTHER" id="PTHR23504:SF15">
    <property type="entry name" value="MAJOR FACILITATOR SUPERFAMILY (MFS) PROFILE DOMAIN-CONTAINING PROTEIN"/>
    <property type="match status" value="1"/>
</dbReference>
<dbReference type="PANTHER" id="PTHR23504">
    <property type="entry name" value="MAJOR FACILITATOR SUPERFAMILY DOMAIN-CONTAINING PROTEIN 10"/>
    <property type="match status" value="1"/>
</dbReference>
<dbReference type="Pfam" id="PF07690">
    <property type="entry name" value="MFS_1"/>
    <property type="match status" value="1"/>
</dbReference>
<dbReference type="SUPFAM" id="SSF103473">
    <property type="entry name" value="MFS general substrate transporter"/>
    <property type="match status" value="1"/>
</dbReference>
<dbReference type="PROSITE" id="PS50850">
    <property type="entry name" value="MFS"/>
    <property type="match status" value="1"/>
</dbReference>
<dbReference type="PROSITE" id="PS00216">
    <property type="entry name" value="SUGAR_TRANSPORT_1"/>
    <property type="match status" value="1"/>
</dbReference>
<accession>P0DPB2</accession>
<feature type="chain" id="PRO_0000442163" description="Major facilitator-type transporter psiT2">
    <location>
        <begin position="1"/>
        <end position="523"/>
    </location>
</feature>
<feature type="transmembrane region" description="Helical" evidence="1">
    <location>
        <begin position="88"/>
        <end position="108"/>
    </location>
</feature>
<feature type="transmembrane region" description="Helical" evidence="1">
    <location>
        <begin position="125"/>
        <end position="145"/>
    </location>
</feature>
<feature type="transmembrane region" description="Helical" evidence="1">
    <location>
        <begin position="149"/>
        <end position="169"/>
    </location>
</feature>
<feature type="transmembrane region" description="Helical" evidence="1">
    <location>
        <begin position="175"/>
        <end position="195"/>
    </location>
</feature>
<feature type="transmembrane region" description="Helical" evidence="1">
    <location>
        <begin position="221"/>
        <end position="241"/>
    </location>
</feature>
<feature type="transmembrane region" description="Helical" evidence="1">
    <location>
        <begin position="317"/>
        <end position="337"/>
    </location>
</feature>
<feature type="transmembrane region" description="Helical" evidence="1">
    <location>
        <begin position="352"/>
        <end position="372"/>
    </location>
</feature>
<feature type="transmembrane region" description="Helical" evidence="1">
    <location>
        <begin position="382"/>
        <end position="402"/>
    </location>
</feature>
<feature type="transmembrane region" description="Helical" evidence="1">
    <location>
        <begin position="419"/>
        <end position="439"/>
    </location>
</feature>
<feature type="transmembrane region" description="Helical" evidence="1">
    <location>
        <begin position="455"/>
        <end position="474"/>
    </location>
</feature>
<feature type="transmembrane region" description="Helical" evidence="1">
    <location>
        <begin position="488"/>
        <end position="508"/>
    </location>
</feature>
<feature type="region of interest" description="Disordered" evidence="3">
    <location>
        <begin position="1"/>
        <end position="45"/>
    </location>
</feature>
<feature type="compositionally biased region" description="Polar residues" evidence="3">
    <location>
        <begin position="1"/>
        <end position="26"/>
    </location>
</feature>
<feature type="glycosylation site" description="N-linked (GlcNAc...) asparagine" evidence="2">
    <location>
        <position position="269"/>
    </location>
</feature>
<feature type="glycosylation site" description="N-linked (GlcNAc...) asparagine" evidence="2">
    <location>
        <position position="410"/>
    </location>
</feature>
<organism>
    <name type="scientific">Psilocybe cubensis</name>
    <name type="common">Psychedelic mushroom</name>
    <name type="synonym">Stropharia cubensis</name>
    <dbReference type="NCBI Taxonomy" id="181762"/>
    <lineage>
        <taxon>Eukaryota</taxon>
        <taxon>Fungi</taxon>
        <taxon>Dikarya</taxon>
        <taxon>Basidiomycota</taxon>
        <taxon>Agaricomycotina</taxon>
        <taxon>Agaricomycetes</taxon>
        <taxon>Agaricomycetidae</taxon>
        <taxon>Agaricales</taxon>
        <taxon>Agaricineae</taxon>
        <taxon>Strophariaceae</taxon>
        <taxon>Psilocybe</taxon>
    </lineage>
</organism>
<sequence length="523" mass="56907">MSLERSTSPNPTERTSLLSDTASTISSRDDVEQSSLKQRRTPIPTGQLGGKVSMHSIIINAEGHLWPYINQFVNDIGVSDGNPRNVGFYSGLIESVFACGEVCSIFMLSRLSDRIGRRPVLLPSALGIAVFTALFGLSSSFTMMLTLRVCAGLLAGATPIVHSIVSELTDDTNNALVVPLYGLITPIGFAIGPLIGGTLEHAATKYPNVFGYELFRKYPYFLPSFVPCCMAIVGVTFGYFFLKETLPSLVKSKKRLERQRSSSSISSENSTLYGATEHIRDSTEETAADEEPDSKPKGITELIRDPSIRAIMASGTFLMFLYTSSDVIFSLYCFTAVEDGGVGLPPEKIGYAFSVAGLIAMLMQLCITPWVLRTFDKAKVYHFCMCSFPLVFALMGCLNPLAQTGYSEINKTLHPTTTGLLYAAIAILLLLARVCVMAFPISMMLVKQTADKHSLATANGLVQVAMTLARAFCPTISSSVFAYSTSHNILGGHFWVVVMVFISLVGVWQSTKIARVTKTKEQL</sequence>
<gene>
    <name evidence="4" type="primary">psiT2</name>
</gene>
<proteinExistence type="inferred from homology"/>
<evidence type="ECO:0000255" key="1"/>
<evidence type="ECO:0000255" key="2">
    <source>
        <dbReference type="PROSITE-ProRule" id="PRU00498"/>
    </source>
</evidence>
<evidence type="ECO:0000256" key="3">
    <source>
        <dbReference type="SAM" id="MobiDB-lite"/>
    </source>
</evidence>
<evidence type="ECO:0000303" key="4">
    <source>
    </source>
</evidence>
<evidence type="ECO:0000305" key="5"/>
<evidence type="ECO:0000305" key="6">
    <source>
    </source>
</evidence>